<protein>
    <recommendedName>
        <fullName evidence="1">Glutamyl-tRNA reductase</fullName>
        <shortName evidence="1">GluTR</shortName>
        <ecNumber evidence="1">1.2.1.70</ecNumber>
    </recommendedName>
</protein>
<organism>
    <name type="scientific">Alkaliphilus metalliredigens (strain QYMF)</name>
    <dbReference type="NCBI Taxonomy" id="293826"/>
    <lineage>
        <taxon>Bacteria</taxon>
        <taxon>Bacillati</taxon>
        <taxon>Bacillota</taxon>
        <taxon>Clostridia</taxon>
        <taxon>Peptostreptococcales</taxon>
        <taxon>Natronincolaceae</taxon>
        <taxon>Alkaliphilus</taxon>
    </lineage>
</organism>
<dbReference type="EC" id="1.2.1.70" evidence="1"/>
<dbReference type="EMBL" id="CP000724">
    <property type="protein sequence ID" value="ABR46301.1"/>
    <property type="molecule type" value="Genomic_DNA"/>
</dbReference>
<dbReference type="RefSeq" id="WP_011971210.1">
    <property type="nucleotide sequence ID" value="NC_009633.1"/>
</dbReference>
<dbReference type="SMR" id="A6TJD3"/>
<dbReference type="STRING" id="293826.Amet_0058"/>
<dbReference type="KEGG" id="amt:Amet_0058"/>
<dbReference type="eggNOG" id="COG0373">
    <property type="taxonomic scope" value="Bacteria"/>
</dbReference>
<dbReference type="HOGENOM" id="CLU_035113_2_2_9"/>
<dbReference type="UniPathway" id="UPA00251">
    <property type="reaction ID" value="UER00316"/>
</dbReference>
<dbReference type="Proteomes" id="UP000001572">
    <property type="component" value="Chromosome"/>
</dbReference>
<dbReference type="GO" id="GO:0008883">
    <property type="term" value="F:glutamyl-tRNA reductase activity"/>
    <property type="evidence" value="ECO:0007669"/>
    <property type="project" value="UniProtKB-UniRule"/>
</dbReference>
<dbReference type="GO" id="GO:0050661">
    <property type="term" value="F:NADP binding"/>
    <property type="evidence" value="ECO:0007669"/>
    <property type="project" value="InterPro"/>
</dbReference>
<dbReference type="GO" id="GO:0019353">
    <property type="term" value="P:protoporphyrinogen IX biosynthetic process from glutamate"/>
    <property type="evidence" value="ECO:0007669"/>
    <property type="project" value="TreeGrafter"/>
</dbReference>
<dbReference type="CDD" id="cd05213">
    <property type="entry name" value="NAD_bind_Glutamyl_tRNA_reduct"/>
    <property type="match status" value="1"/>
</dbReference>
<dbReference type="FunFam" id="3.30.460.30:FF:000001">
    <property type="entry name" value="Glutamyl-tRNA reductase"/>
    <property type="match status" value="1"/>
</dbReference>
<dbReference type="FunFam" id="3.40.50.720:FF:000031">
    <property type="entry name" value="Glutamyl-tRNA reductase"/>
    <property type="match status" value="1"/>
</dbReference>
<dbReference type="Gene3D" id="3.30.460.30">
    <property type="entry name" value="Glutamyl-tRNA reductase, N-terminal domain"/>
    <property type="match status" value="1"/>
</dbReference>
<dbReference type="Gene3D" id="3.40.50.720">
    <property type="entry name" value="NAD(P)-binding Rossmann-like Domain"/>
    <property type="match status" value="1"/>
</dbReference>
<dbReference type="HAMAP" id="MF_00087">
    <property type="entry name" value="Glu_tRNA_reductase"/>
    <property type="match status" value="1"/>
</dbReference>
<dbReference type="InterPro" id="IPR000343">
    <property type="entry name" value="4pyrrol_synth_GluRdtase"/>
</dbReference>
<dbReference type="InterPro" id="IPR015896">
    <property type="entry name" value="4pyrrol_synth_GluRdtase_dimer"/>
</dbReference>
<dbReference type="InterPro" id="IPR015895">
    <property type="entry name" value="4pyrrol_synth_GluRdtase_N"/>
</dbReference>
<dbReference type="InterPro" id="IPR036453">
    <property type="entry name" value="GluRdtase_dimer_dom_sf"/>
</dbReference>
<dbReference type="InterPro" id="IPR036343">
    <property type="entry name" value="GluRdtase_N_sf"/>
</dbReference>
<dbReference type="InterPro" id="IPR036291">
    <property type="entry name" value="NAD(P)-bd_dom_sf"/>
</dbReference>
<dbReference type="InterPro" id="IPR006151">
    <property type="entry name" value="Shikm_DH/Glu-tRNA_Rdtase"/>
</dbReference>
<dbReference type="NCBIfam" id="TIGR01035">
    <property type="entry name" value="hemA"/>
    <property type="match status" value="1"/>
</dbReference>
<dbReference type="PANTHER" id="PTHR43013">
    <property type="entry name" value="GLUTAMYL-TRNA REDUCTASE"/>
    <property type="match status" value="1"/>
</dbReference>
<dbReference type="PANTHER" id="PTHR43013:SF1">
    <property type="entry name" value="GLUTAMYL-TRNA REDUCTASE"/>
    <property type="match status" value="1"/>
</dbReference>
<dbReference type="Pfam" id="PF00745">
    <property type="entry name" value="GlutR_dimer"/>
    <property type="match status" value="1"/>
</dbReference>
<dbReference type="Pfam" id="PF05201">
    <property type="entry name" value="GlutR_N"/>
    <property type="match status" value="1"/>
</dbReference>
<dbReference type="Pfam" id="PF01488">
    <property type="entry name" value="Shikimate_DH"/>
    <property type="match status" value="1"/>
</dbReference>
<dbReference type="PIRSF" id="PIRSF000445">
    <property type="entry name" value="4pyrrol_synth_GluRdtase"/>
    <property type="match status" value="1"/>
</dbReference>
<dbReference type="SUPFAM" id="SSF69742">
    <property type="entry name" value="Glutamyl tRNA-reductase catalytic, N-terminal domain"/>
    <property type="match status" value="1"/>
</dbReference>
<dbReference type="SUPFAM" id="SSF69075">
    <property type="entry name" value="Glutamyl tRNA-reductase dimerization domain"/>
    <property type="match status" value="1"/>
</dbReference>
<dbReference type="SUPFAM" id="SSF51735">
    <property type="entry name" value="NAD(P)-binding Rossmann-fold domains"/>
    <property type="match status" value="1"/>
</dbReference>
<proteinExistence type="inferred from homology"/>
<evidence type="ECO:0000255" key="1">
    <source>
        <dbReference type="HAMAP-Rule" id="MF_00087"/>
    </source>
</evidence>
<comment type="function">
    <text evidence="1">Catalyzes the NADPH-dependent reduction of glutamyl-tRNA(Glu) to glutamate 1-semialdehyde (GSA).</text>
</comment>
<comment type="catalytic activity">
    <reaction evidence="1">
        <text>(S)-4-amino-5-oxopentanoate + tRNA(Glu) + NADP(+) = L-glutamyl-tRNA(Glu) + NADPH + H(+)</text>
        <dbReference type="Rhea" id="RHEA:12344"/>
        <dbReference type="Rhea" id="RHEA-COMP:9663"/>
        <dbReference type="Rhea" id="RHEA-COMP:9680"/>
        <dbReference type="ChEBI" id="CHEBI:15378"/>
        <dbReference type="ChEBI" id="CHEBI:57501"/>
        <dbReference type="ChEBI" id="CHEBI:57783"/>
        <dbReference type="ChEBI" id="CHEBI:58349"/>
        <dbReference type="ChEBI" id="CHEBI:78442"/>
        <dbReference type="ChEBI" id="CHEBI:78520"/>
        <dbReference type="EC" id="1.2.1.70"/>
    </reaction>
</comment>
<comment type="pathway">
    <text evidence="1">Porphyrin-containing compound metabolism; protoporphyrin-IX biosynthesis; 5-aminolevulinate from L-glutamyl-tRNA(Glu): step 1/2.</text>
</comment>
<comment type="subunit">
    <text evidence="1">Homodimer.</text>
</comment>
<comment type="domain">
    <text evidence="1">Possesses an unusual extended V-shaped dimeric structure with each monomer consisting of three distinct domains arranged along a curved 'spinal' alpha-helix. The N-terminal catalytic domain specifically recognizes the glutamate moiety of the substrate. The second domain is the NADPH-binding domain, and the third C-terminal domain is responsible for dimerization.</text>
</comment>
<comment type="miscellaneous">
    <text evidence="1">During catalysis, the active site Cys acts as a nucleophile attacking the alpha-carbonyl group of tRNA-bound glutamate with the formation of a thioester intermediate between enzyme and glutamate, and the concomitant release of tRNA(Glu). The thioester intermediate is finally reduced by direct hydride transfer from NADPH, to form the product GSA.</text>
</comment>
<comment type="similarity">
    <text evidence="1">Belongs to the glutamyl-tRNA reductase family.</text>
</comment>
<reference key="1">
    <citation type="journal article" date="2016" name="Genome Announc.">
        <title>Complete genome sequence of Alkaliphilus metalliredigens strain QYMF, an alkaliphilic and metal-reducing bacterium isolated from borax-contaminated leachate ponds.</title>
        <authorList>
            <person name="Hwang C."/>
            <person name="Copeland A."/>
            <person name="Lucas S."/>
            <person name="Lapidus A."/>
            <person name="Barry K."/>
            <person name="Detter J.C."/>
            <person name="Glavina Del Rio T."/>
            <person name="Hammon N."/>
            <person name="Israni S."/>
            <person name="Dalin E."/>
            <person name="Tice H."/>
            <person name="Pitluck S."/>
            <person name="Chertkov O."/>
            <person name="Brettin T."/>
            <person name="Bruce D."/>
            <person name="Han C."/>
            <person name="Schmutz J."/>
            <person name="Larimer F."/>
            <person name="Land M.L."/>
            <person name="Hauser L."/>
            <person name="Kyrpides N."/>
            <person name="Mikhailova N."/>
            <person name="Ye Q."/>
            <person name="Zhou J."/>
            <person name="Richardson P."/>
            <person name="Fields M.W."/>
        </authorList>
    </citation>
    <scope>NUCLEOTIDE SEQUENCE [LARGE SCALE GENOMIC DNA]</scope>
    <source>
        <strain>QYMF</strain>
    </source>
</reference>
<gene>
    <name evidence="1" type="primary">hemA</name>
    <name type="ordered locus">Amet_0058</name>
</gene>
<sequence>MKIIVFGITHKKATIDLREKVAFSQSKKQEAYSLLKESPFIHEAVILSTCNRSEVFAVVQDTSIARRWFKRFYTDFFQLKETALEGCNHFEKGREAVQYLYHVCVGVDSLVIGEDQILGQVKEAHAEALDFAATGKILNKLFLEAVTTAKEVKTETAISENALSISSIAVKQMENHLKGLVGKTVLVVGFGKMSRIAIENLLCKGIKRLYICNRTKESVQELIEKHPQIHYLSYDQKYEMLNGVDAVISATGAPHFIFYKEDMEKIYQKHRPMCMIDIALPRDIDPAVKEIEGIELFHIDDLKEIANENLAYRMDCIEIIKQSINEAIEKYEGWYQCLPIYPRIQAIKAYSETLTDQELEKLFKRLDHMAEEDRQVIEVVVKSLVKKMWKTPILQLKDAGIRGNGEAFAAFVDEFLGLDAGCGK</sequence>
<keyword id="KW-0521">NADP</keyword>
<keyword id="KW-0560">Oxidoreductase</keyword>
<keyword id="KW-0627">Porphyrin biosynthesis</keyword>
<keyword id="KW-1185">Reference proteome</keyword>
<feature type="chain" id="PRO_1000057567" description="Glutamyl-tRNA reductase">
    <location>
        <begin position="1"/>
        <end position="424"/>
    </location>
</feature>
<feature type="active site" description="Nucleophile" evidence="1">
    <location>
        <position position="50"/>
    </location>
</feature>
<feature type="binding site" evidence="1">
    <location>
        <begin position="49"/>
        <end position="52"/>
    </location>
    <ligand>
        <name>substrate</name>
    </ligand>
</feature>
<feature type="binding site" evidence="1">
    <location>
        <position position="109"/>
    </location>
    <ligand>
        <name>substrate</name>
    </ligand>
</feature>
<feature type="binding site" evidence="1">
    <location>
        <begin position="114"/>
        <end position="116"/>
    </location>
    <ligand>
        <name>substrate</name>
    </ligand>
</feature>
<feature type="binding site" evidence="1">
    <location>
        <position position="120"/>
    </location>
    <ligand>
        <name>substrate</name>
    </ligand>
</feature>
<feature type="binding site" evidence="1">
    <location>
        <begin position="189"/>
        <end position="194"/>
    </location>
    <ligand>
        <name>NADP(+)</name>
        <dbReference type="ChEBI" id="CHEBI:58349"/>
    </ligand>
</feature>
<name>HEM1_ALKMQ</name>
<accession>A6TJD3</accession>